<protein>
    <recommendedName>
        <fullName>RNA-binding motif, single-stranded-interacting protein 2</fullName>
    </recommendedName>
</protein>
<proteinExistence type="evidence at protein level"/>
<evidence type="ECO:0000250" key="1">
    <source>
        <dbReference type="UniProtKB" id="Q15434"/>
    </source>
</evidence>
<evidence type="ECO:0000255" key="2">
    <source>
        <dbReference type="PROSITE-ProRule" id="PRU00176"/>
    </source>
</evidence>
<evidence type="ECO:0000256" key="3">
    <source>
        <dbReference type="SAM" id="MobiDB-lite"/>
    </source>
</evidence>
<evidence type="ECO:0000305" key="4"/>
<comment type="subcellular location">
    <subcellularLocation>
        <location evidence="4">Nucleus</location>
    </subcellularLocation>
</comment>
<accession>Q8VC70</accession>
<gene>
    <name type="primary">Rbms2</name>
</gene>
<reference key="1">
    <citation type="journal article" date="2004" name="Genome Res.">
        <title>The status, quality, and expansion of the NIH full-length cDNA project: the Mammalian Gene Collection (MGC).</title>
        <authorList>
            <consortium name="The MGC Project Team"/>
        </authorList>
    </citation>
    <scope>NUCLEOTIDE SEQUENCE [LARGE SCALE MRNA]</scope>
    <source>
        <strain>FVB/N</strain>
        <tissue>Colon</tissue>
    </source>
</reference>
<reference key="2">
    <citation type="journal article" date="2005" name="Science">
        <title>The transcriptional landscape of the mammalian genome.</title>
        <authorList>
            <person name="Carninci P."/>
            <person name="Kasukawa T."/>
            <person name="Katayama S."/>
            <person name="Gough J."/>
            <person name="Frith M.C."/>
            <person name="Maeda N."/>
            <person name="Oyama R."/>
            <person name="Ravasi T."/>
            <person name="Lenhard B."/>
            <person name="Wells C."/>
            <person name="Kodzius R."/>
            <person name="Shimokawa K."/>
            <person name="Bajic V.B."/>
            <person name="Brenner S.E."/>
            <person name="Batalov S."/>
            <person name="Forrest A.R."/>
            <person name="Zavolan M."/>
            <person name="Davis M.J."/>
            <person name="Wilming L.G."/>
            <person name="Aidinis V."/>
            <person name="Allen J.E."/>
            <person name="Ambesi-Impiombato A."/>
            <person name="Apweiler R."/>
            <person name="Aturaliya R.N."/>
            <person name="Bailey T.L."/>
            <person name="Bansal M."/>
            <person name="Baxter L."/>
            <person name="Beisel K.W."/>
            <person name="Bersano T."/>
            <person name="Bono H."/>
            <person name="Chalk A.M."/>
            <person name="Chiu K.P."/>
            <person name="Choudhary V."/>
            <person name="Christoffels A."/>
            <person name="Clutterbuck D.R."/>
            <person name="Crowe M.L."/>
            <person name="Dalla E."/>
            <person name="Dalrymple B.P."/>
            <person name="de Bono B."/>
            <person name="Della Gatta G."/>
            <person name="di Bernardo D."/>
            <person name="Down T."/>
            <person name="Engstrom P."/>
            <person name="Fagiolini M."/>
            <person name="Faulkner G."/>
            <person name="Fletcher C.F."/>
            <person name="Fukushima T."/>
            <person name="Furuno M."/>
            <person name="Futaki S."/>
            <person name="Gariboldi M."/>
            <person name="Georgii-Hemming P."/>
            <person name="Gingeras T.R."/>
            <person name="Gojobori T."/>
            <person name="Green R.E."/>
            <person name="Gustincich S."/>
            <person name="Harbers M."/>
            <person name="Hayashi Y."/>
            <person name="Hensch T.K."/>
            <person name="Hirokawa N."/>
            <person name="Hill D."/>
            <person name="Huminiecki L."/>
            <person name="Iacono M."/>
            <person name="Ikeo K."/>
            <person name="Iwama A."/>
            <person name="Ishikawa T."/>
            <person name="Jakt M."/>
            <person name="Kanapin A."/>
            <person name="Katoh M."/>
            <person name="Kawasawa Y."/>
            <person name="Kelso J."/>
            <person name="Kitamura H."/>
            <person name="Kitano H."/>
            <person name="Kollias G."/>
            <person name="Krishnan S.P."/>
            <person name="Kruger A."/>
            <person name="Kummerfeld S.K."/>
            <person name="Kurochkin I.V."/>
            <person name="Lareau L.F."/>
            <person name="Lazarevic D."/>
            <person name="Lipovich L."/>
            <person name="Liu J."/>
            <person name="Liuni S."/>
            <person name="McWilliam S."/>
            <person name="Madan Babu M."/>
            <person name="Madera M."/>
            <person name="Marchionni L."/>
            <person name="Matsuda H."/>
            <person name="Matsuzawa S."/>
            <person name="Miki H."/>
            <person name="Mignone F."/>
            <person name="Miyake S."/>
            <person name="Morris K."/>
            <person name="Mottagui-Tabar S."/>
            <person name="Mulder N."/>
            <person name="Nakano N."/>
            <person name="Nakauchi H."/>
            <person name="Ng P."/>
            <person name="Nilsson R."/>
            <person name="Nishiguchi S."/>
            <person name="Nishikawa S."/>
            <person name="Nori F."/>
            <person name="Ohara O."/>
            <person name="Okazaki Y."/>
            <person name="Orlando V."/>
            <person name="Pang K.C."/>
            <person name="Pavan W.J."/>
            <person name="Pavesi G."/>
            <person name="Pesole G."/>
            <person name="Petrovsky N."/>
            <person name="Piazza S."/>
            <person name="Reed J."/>
            <person name="Reid J.F."/>
            <person name="Ring B.Z."/>
            <person name="Ringwald M."/>
            <person name="Rost B."/>
            <person name="Ruan Y."/>
            <person name="Salzberg S.L."/>
            <person name="Sandelin A."/>
            <person name="Schneider C."/>
            <person name="Schoenbach C."/>
            <person name="Sekiguchi K."/>
            <person name="Semple C.A."/>
            <person name="Seno S."/>
            <person name="Sessa L."/>
            <person name="Sheng Y."/>
            <person name="Shibata Y."/>
            <person name="Shimada H."/>
            <person name="Shimada K."/>
            <person name="Silva D."/>
            <person name="Sinclair B."/>
            <person name="Sperling S."/>
            <person name="Stupka E."/>
            <person name="Sugiura K."/>
            <person name="Sultana R."/>
            <person name="Takenaka Y."/>
            <person name="Taki K."/>
            <person name="Tammoja K."/>
            <person name="Tan S.L."/>
            <person name="Tang S."/>
            <person name="Taylor M.S."/>
            <person name="Tegner J."/>
            <person name="Teichmann S.A."/>
            <person name="Ueda H.R."/>
            <person name="van Nimwegen E."/>
            <person name="Verardo R."/>
            <person name="Wei C.L."/>
            <person name="Yagi K."/>
            <person name="Yamanishi H."/>
            <person name="Zabarovsky E."/>
            <person name="Zhu S."/>
            <person name="Zimmer A."/>
            <person name="Hide W."/>
            <person name="Bult C."/>
            <person name="Grimmond S.M."/>
            <person name="Teasdale R.D."/>
            <person name="Liu E.T."/>
            <person name="Brusic V."/>
            <person name="Quackenbush J."/>
            <person name="Wahlestedt C."/>
            <person name="Mattick J.S."/>
            <person name="Hume D.A."/>
            <person name="Kai C."/>
            <person name="Sasaki D."/>
            <person name="Tomaru Y."/>
            <person name="Fukuda S."/>
            <person name="Kanamori-Katayama M."/>
            <person name="Suzuki M."/>
            <person name="Aoki J."/>
            <person name="Arakawa T."/>
            <person name="Iida J."/>
            <person name="Imamura K."/>
            <person name="Itoh M."/>
            <person name="Kato T."/>
            <person name="Kawaji H."/>
            <person name="Kawagashira N."/>
            <person name="Kawashima T."/>
            <person name="Kojima M."/>
            <person name="Kondo S."/>
            <person name="Konno H."/>
            <person name="Nakano K."/>
            <person name="Ninomiya N."/>
            <person name="Nishio T."/>
            <person name="Okada M."/>
            <person name="Plessy C."/>
            <person name="Shibata K."/>
            <person name="Shiraki T."/>
            <person name="Suzuki S."/>
            <person name="Tagami M."/>
            <person name="Waki K."/>
            <person name="Watahiki A."/>
            <person name="Okamura-Oho Y."/>
            <person name="Suzuki H."/>
            <person name="Kawai J."/>
            <person name="Hayashizaki Y."/>
        </authorList>
    </citation>
    <scope>NUCLEOTIDE SEQUENCE [LARGE SCALE MRNA]</scope>
    <source>
        <strain>C57BL/6J</strain>
        <tissue>Ovary</tissue>
    </source>
</reference>
<reference key="3">
    <citation type="journal article" date="2010" name="Cell">
        <title>A tissue-specific atlas of mouse protein phosphorylation and expression.</title>
        <authorList>
            <person name="Huttlin E.L."/>
            <person name="Jedrychowski M.P."/>
            <person name="Elias J.E."/>
            <person name="Goswami T."/>
            <person name="Rad R."/>
            <person name="Beausoleil S.A."/>
            <person name="Villen J."/>
            <person name="Haas W."/>
            <person name="Sowa M.E."/>
            <person name="Gygi S.P."/>
        </authorList>
    </citation>
    <scope>IDENTIFICATION BY MASS SPECTROMETRY [LARGE SCALE ANALYSIS]</scope>
    <source>
        <tissue>Heart</tissue>
        <tissue>Lung</tissue>
    </source>
</reference>
<keyword id="KW-0007">Acetylation</keyword>
<keyword id="KW-0539">Nucleus</keyword>
<keyword id="KW-0597">Phosphoprotein</keyword>
<keyword id="KW-1185">Reference proteome</keyword>
<keyword id="KW-0677">Repeat</keyword>
<keyword id="KW-0694">RNA-binding</keyword>
<feature type="chain" id="PRO_0000081801" description="RNA-binding motif, single-stranded-interacting protein 2">
    <location>
        <begin position="1"/>
        <end position="383"/>
    </location>
</feature>
<feature type="domain" description="RRM 1" evidence="2">
    <location>
        <begin position="58"/>
        <end position="131"/>
    </location>
</feature>
<feature type="domain" description="RRM 2" evidence="2">
    <location>
        <begin position="137"/>
        <end position="222"/>
    </location>
</feature>
<feature type="region of interest" description="Disordered" evidence="3">
    <location>
        <begin position="28"/>
        <end position="56"/>
    </location>
</feature>
<feature type="region of interest" description="Disordered" evidence="3">
    <location>
        <begin position="352"/>
        <end position="383"/>
    </location>
</feature>
<feature type="compositionally biased region" description="Gly residues" evidence="3">
    <location>
        <begin position="42"/>
        <end position="51"/>
    </location>
</feature>
<feature type="modified residue" description="N-acetylmethionine" evidence="1">
    <location>
        <position position="1"/>
    </location>
</feature>
<feature type="modified residue" description="Phosphoserine" evidence="1">
    <location>
        <position position="108"/>
    </location>
</feature>
<feature type="modified residue" description="Phosphoserine" evidence="1">
    <location>
        <position position="287"/>
    </location>
</feature>
<dbReference type="EMBL" id="BC021627">
    <property type="protein sequence ID" value="AAH21627.1"/>
    <property type="molecule type" value="mRNA"/>
</dbReference>
<dbReference type="EMBL" id="AK054482">
    <property type="protein sequence ID" value="BAC35797.1"/>
    <property type="molecule type" value="mRNA"/>
</dbReference>
<dbReference type="CCDS" id="CCDS24261.1"/>
<dbReference type="RefSeq" id="NP_001034169.1">
    <property type="nucleotide sequence ID" value="NM_001039080.1"/>
</dbReference>
<dbReference type="RefSeq" id="NP_001416149.1">
    <property type="nucleotide sequence ID" value="NM_001429220.1"/>
</dbReference>
<dbReference type="RefSeq" id="NP_001416150.1">
    <property type="nucleotide sequence ID" value="NM_001429221.1"/>
</dbReference>
<dbReference type="RefSeq" id="NP_062685.2">
    <property type="nucleotide sequence ID" value="NM_019711.3"/>
</dbReference>
<dbReference type="RefSeq" id="XP_006513962.1">
    <property type="nucleotide sequence ID" value="XM_006513899.2"/>
</dbReference>
<dbReference type="RefSeq" id="XP_006513963.1">
    <property type="nucleotide sequence ID" value="XM_006513900.2"/>
</dbReference>
<dbReference type="SMR" id="Q8VC70"/>
<dbReference type="BioGRID" id="208029">
    <property type="interactions" value="2"/>
</dbReference>
<dbReference type="FunCoup" id="Q8VC70">
    <property type="interactions" value="849"/>
</dbReference>
<dbReference type="STRING" id="10090.ENSMUSP00000089664"/>
<dbReference type="iPTMnet" id="Q8VC70"/>
<dbReference type="PhosphoSitePlus" id="Q8VC70"/>
<dbReference type="PaxDb" id="10090-ENSMUSP00000089664"/>
<dbReference type="PeptideAtlas" id="Q8VC70"/>
<dbReference type="ProteomicsDB" id="255134"/>
<dbReference type="Pumba" id="Q8VC70"/>
<dbReference type="Antibodypedia" id="28267">
    <property type="antibodies" value="213 antibodies from 25 providers"/>
</dbReference>
<dbReference type="DNASU" id="56516"/>
<dbReference type="Ensembl" id="ENSMUST00000092033.4">
    <property type="protein sequence ID" value="ENSMUSP00000089664.3"/>
    <property type="gene ID" value="ENSMUSG00000040043.18"/>
</dbReference>
<dbReference type="GeneID" id="56516"/>
<dbReference type="KEGG" id="mmu:56516"/>
<dbReference type="UCSC" id="uc007hlm.1">
    <property type="organism name" value="mouse"/>
</dbReference>
<dbReference type="AGR" id="MGI:1861776"/>
<dbReference type="CTD" id="5939"/>
<dbReference type="MGI" id="MGI:1861776">
    <property type="gene designation" value="Rbms2"/>
</dbReference>
<dbReference type="VEuPathDB" id="HostDB:ENSMUSG00000040043"/>
<dbReference type="eggNOG" id="KOG4733">
    <property type="taxonomic scope" value="Eukaryota"/>
</dbReference>
<dbReference type="GeneTree" id="ENSGT00940000155250"/>
<dbReference type="InParanoid" id="Q8VC70"/>
<dbReference type="OMA" id="PNASWMH"/>
<dbReference type="OrthoDB" id="271725at2759"/>
<dbReference type="PhylomeDB" id="Q8VC70"/>
<dbReference type="TreeFam" id="TF314644"/>
<dbReference type="BioGRID-ORCS" id="56516">
    <property type="hits" value="3 hits in 77 CRISPR screens"/>
</dbReference>
<dbReference type="ChiTaRS" id="Rbms2">
    <property type="organism name" value="mouse"/>
</dbReference>
<dbReference type="PRO" id="PR:Q8VC70"/>
<dbReference type="Proteomes" id="UP000000589">
    <property type="component" value="Chromosome 10"/>
</dbReference>
<dbReference type="RNAct" id="Q8VC70">
    <property type="molecule type" value="protein"/>
</dbReference>
<dbReference type="Bgee" id="ENSMUSG00000040043">
    <property type="expression patterns" value="Expressed in placenta labyrinth and 218 other cell types or tissues"/>
</dbReference>
<dbReference type="ExpressionAtlas" id="Q8VC70">
    <property type="expression patterns" value="baseline and differential"/>
</dbReference>
<dbReference type="GO" id="GO:0005634">
    <property type="term" value="C:nucleus"/>
    <property type="evidence" value="ECO:0007669"/>
    <property type="project" value="UniProtKB-SubCell"/>
</dbReference>
<dbReference type="GO" id="GO:1990904">
    <property type="term" value="C:ribonucleoprotein complex"/>
    <property type="evidence" value="ECO:0007669"/>
    <property type="project" value="InterPro"/>
</dbReference>
<dbReference type="GO" id="GO:0003723">
    <property type="term" value="F:RNA binding"/>
    <property type="evidence" value="ECO:0007669"/>
    <property type="project" value="UniProtKB-KW"/>
</dbReference>
<dbReference type="CDD" id="cd12471">
    <property type="entry name" value="RRM1_MSSP2"/>
    <property type="match status" value="1"/>
</dbReference>
<dbReference type="CDD" id="cd12474">
    <property type="entry name" value="RRM2_MSSP2"/>
    <property type="match status" value="1"/>
</dbReference>
<dbReference type="FunFam" id="3.30.70.330:FF:000012">
    <property type="entry name" value="RNA-binding motif, single-stranded-interacting protein 3 isoform 1"/>
    <property type="match status" value="1"/>
</dbReference>
<dbReference type="FunFam" id="3.30.70.330:FF:000014">
    <property type="entry name" value="RNA-binding motif, single-stranded-interacting protein 3 isoform 1"/>
    <property type="match status" value="1"/>
</dbReference>
<dbReference type="Gene3D" id="3.30.70.330">
    <property type="match status" value="2"/>
</dbReference>
<dbReference type="InterPro" id="IPR002343">
    <property type="entry name" value="Hud_Sxl_RNA"/>
</dbReference>
<dbReference type="InterPro" id="IPR012677">
    <property type="entry name" value="Nucleotide-bd_a/b_plait_sf"/>
</dbReference>
<dbReference type="InterPro" id="IPR035979">
    <property type="entry name" value="RBD_domain_sf"/>
</dbReference>
<dbReference type="InterPro" id="IPR000504">
    <property type="entry name" value="RRM_dom"/>
</dbReference>
<dbReference type="PANTHER" id="PTHR24012">
    <property type="entry name" value="RNA BINDING PROTEIN"/>
    <property type="match status" value="1"/>
</dbReference>
<dbReference type="Pfam" id="PF00076">
    <property type="entry name" value="RRM_1"/>
    <property type="match status" value="2"/>
</dbReference>
<dbReference type="PRINTS" id="PR00961">
    <property type="entry name" value="HUDSXLRNA"/>
</dbReference>
<dbReference type="SMART" id="SM00360">
    <property type="entry name" value="RRM"/>
    <property type="match status" value="2"/>
</dbReference>
<dbReference type="SUPFAM" id="SSF54928">
    <property type="entry name" value="RNA-binding domain, RBD"/>
    <property type="match status" value="1"/>
</dbReference>
<dbReference type="PROSITE" id="PS50102">
    <property type="entry name" value="RRM"/>
    <property type="match status" value="2"/>
</dbReference>
<organism>
    <name type="scientific">Mus musculus</name>
    <name type="common">Mouse</name>
    <dbReference type="NCBI Taxonomy" id="10090"/>
    <lineage>
        <taxon>Eukaryota</taxon>
        <taxon>Metazoa</taxon>
        <taxon>Chordata</taxon>
        <taxon>Craniata</taxon>
        <taxon>Vertebrata</taxon>
        <taxon>Euteleostomi</taxon>
        <taxon>Mammalia</taxon>
        <taxon>Eutheria</taxon>
        <taxon>Euarchontoglires</taxon>
        <taxon>Glires</taxon>
        <taxon>Rodentia</taxon>
        <taxon>Myomorpha</taxon>
        <taxon>Muroidea</taxon>
        <taxon>Muridae</taxon>
        <taxon>Murinae</taxon>
        <taxon>Mus</taxon>
        <taxon>Mus</taxon>
    </lineage>
</organism>
<sequence length="383" mass="40724">MLLSVTSRPGISTFGYNKNNKKLYVAQQMAPPSPRNSTPNSSGGGGGGSGGNDQLSKTNLYIRGLQPGTTDQDLVKLCQPYGKIVSTKAILDKTTNKCKGYGFVDFDSPSSAQKAVTALKASGVQAQMAKQQEQDPTNLYISNLPLSMDEQELEGMLKPFGQVISTRILRDTSGASRGVGFARMESTEKCEAIITHFNGKYIKTPPGVAAPSDPLLCKFADGGPKKRQSQGRYVQNGRAWPRNGDMGGMALTYDPTAALQNGFYAAPYSIAHSRMLAQSALAPYLPSPVSSYQGSVLTPGMDHPLSLQPASMMGPLTQQLGHLSLNSLGTFMPAAAAMHGAYISQYPAVPSSSVSAEESNGQQNQLAVEPPSDHGVYPFQFSK</sequence>
<name>RBMS2_MOUSE</name>